<reference key="1">
    <citation type="journal article" date="2001" name="Science">
        <title>Comparative genomics of Listeria species.</title>
        <authorList>
            <person name="Glaser P."/>
            <person name="Frangeul L."/>
            <person name="Buchrieser C."/>
            <person name="Rusniok C."/>
            <person name="Amend A."/>
            <person name="Baquero F."/>
            <person name="Berche P."/>
            <person name="Bloecker H."/>
            <person name="Brandt P."/>
            <person name="Chakraborty T."/>
            <person name="Charbit A."/>
            <person name="Chetouani F."/>
            <person name="Couve E."/>
            <person name="de Daruvar A."/>
            <person name="Dehoux P."/>
            <person name="Domann E."/>
            <person name="Dominguez-Bernal G."/>
            <person name="Duchaud E."/>
            <person name="Durant L."/>
            <person name="Dussurget O."/>
            <person name="Entian K.-D."/>
            <person name="Fsihi H."/>
            <person name="Garcia-del Portillo F."/>
            <person name="Garrido P."/>
            <person name="Gautier L."/>
            <person name="Goebel W."/>
            <person name="Gomez-Lopez N."/>
            <person name="Hain T."/>
            <person name="Hauf J."/>
            <person name="Jackson D."/>
            <person name="Jones L.-M."/>
            <person name="Kaerst U."/>
            <person name="Kreft J."/>
            <person name="Kuhn M."/>
            <person name="Kunst F."/>
            <person name="Kurapkat G."/>
            <person name="Madueno E."/>
            <person name="Maitournam A."/>
            <person name="Mata Vicente J."/>
            <person name="Ng E."/>
            <person name="Nedjari H."/>
            <person name="Nordsiek G."/>
            <person name="Novella S."/>
            <person name="de Pablos B."/>
            <person name="Perez-Diaz J.-C."/>
            <person name="Purcell R."/>
            <person name="Remmel B."/>
            <person name="Rose M."/>
            <person name="Schlueter T."/>
            <person name="Simoes N."/>
            <person name="Tierrez A."/>
            <person name="Vazquez-Boland J.-A."/>
            <person name="Voss H."/>
            <person name="Wehland J."/>
            <person name="Cossart P."/>
        </authorList>
    </citation>
    <scope>NUCLEOTIDE SEQUENCE [LARGE SCALE GENOMIC DNA]</scope>
    <source>
        <strain>ATCC BAA-680 / CLIP 11262</strain>
    </source>
</reference>
<keyword id="KW-0450">Lipoyl</keyword>
<accession>Q928L3</accession>
<proteinExistence type="inferred from homology"/>
<name>GCSH_LISIN</name>
<sequence length="125" mass="13732">MSLPKDLLYTEEHEWVKAEDGSYIIGITDFAQDQLGDIVFVELPEVGDTVTKGDSIGSIESVKTVSDFYAPVTGKVVAVNETLEDEPELINSNPYDTGWILKLTEVEEADVTALLSSDDYEKGLD</sequence>
<dbReference type="EMBL" id="AL596172">
    <property type="protein sequence ID" value="CAC97746.1"/>
    <property type="molecule type" value="Genomic_DNA"/>
</dbReference>
<dbReference type="PIR" id="AB1747">
    <property type="entry name" value="AB1747"/>
</dbReference>
<dbReference type="RefSeq" id="WP_003769150.1">
    <property type="nucleotide sequence ID" value="NC_003212.1"/>
</dbReference>
<dbReference type="SMR" id="Q928L3"/>
<dbReference type="STRING" id="272626.gene:17566899"/>
<dbReference type="GeneID" id="93235830"/>
<dbReference type="KEGG" id="lin:lin2519"/>
<dbReference type="eggNOG" id="COG0509">
    <property type="taxonomic scope" value="Bacteria"/>
</dbReference>
<dbReference type="HOGENOM" id="CLU_097408_2_0_9"/>
<dbReference type="OrthoDB" id="9796712at2"/>
<dbReference type="Proteomes" id="UP000002513">
    <property type="component" value="Chromosome"/>
</dbReference>
<dbReference type="GO" id="GO:0005829">
    <property type="term" value="C:cytosol"/>
    <property type="evidence" value="ECO:0007669"/>
    <property type="project" value="TreeGrafter"/>
</dbReference>
<dbReference type="GO" id="GO:0005960">
    <property type="term" value="C:glycine cleavage complex"/>
    <property type="evidence" value="ECO:0007669"/>
    <property type="project" value="InterPro"/>
</dbReference>
<dbReference type="GO" id="GO:0019464">
    <property type="term" value="P:glycine decarboxylation via glycine cleavage system"/>
    <property type="evidence" value="ECO:0007669"/>
    <property type="project" value="UniProtKB-UniRule"/>
</dbReference>
<dbReference type="CDD" id="cd06848">
    <property type="entry name" value="GCS_H"/>
    <property type="match status" value="1"/>
</dbReference>
<dbReference type="Gene3D" id="2.40.50.100">
    <property type="match status" value="1"/>
</dbReference>
<dbReference type="HAMAP" id="MF_00272">
    <property type="entry name" value="GcvH"/>
    <property type="match status" value="1"/>
</dbReference>
<dbReference type="InterPro" id="IPR003016">
    <property type="entry name" value="2-oxoA_DH_lipoyl-BS"/>
</dbReference>
<dbReference type="InterPro" id="IPR000089">
    <property type="entry name" value="Biotin_lipoyl"/>
</dbReference>
<dbReference type="InterPro" id="IPR002930">
    <property type="entry name" value="GCV_H"/>
</dbReference>
<dbReference type="InterPro" id="IPR033753">
    <property type="entry name" value="GCV_H/Fam206"/>
</dbReference>
<dbReference type="InterPro" id="IPR017453">
    <property type="entry name" value="GCV_H_sub"/>
</dbReference>
<dbReference type="InterPro" id="IPR011053">
    <property type="entry name" value="Single_hybrid_motif"/>
</dbReference>
<dbReference type="NCBIfam" id="TIGR00527">
    <property type="entry name" value="gcvH"/>
    <property type="match status" value="1"/>
</dbReference>
<dbReference type="NCBIfam" id="NF002270">
    <property type="entry name" value="PRK01202.1"/>
    <property type="match status" value="1"/>
</dbReference>
<dbReference type="PANTHER" id="PTHR11715">
    <property type="entry name" value="GLYCINE CLEAVAGE SYSTEM H PROTEIN"/>
    <property type="match status" value="1"/>
</dbReference>
<dbReference type="PANTHER" id="PTHR11715:SF3">
    <property type="entry name" value="GLYCINE CLEAVAGE SYSTEM H PROTEIN-RELATED"/>
    <property type="match status" value="1"/>
</dbReference>
<dbReference type="Pfam" id="PF01597">
    <property type="entry name" value="GCV_H"/>
    <property type="match status" value="1"/>
</dbReference>
<dbReference type="SUPFAM" id="SSF51230">
    <property type="entry name" value="Single hybrid motif"/>
    <property type="match status" value="1"/>
</dbReference>
<dbReference type="PROSITE" id="PS50968">
    <property type="entry name" value="BIOTINYL_LIPOYL"/>
    <property type="match status" value="1"/>
</dbReference>
<dbReference type="PROSITE" id="PS00189">
    <property type="entry name" value="LIPOYL"/>
    <property type="match status" value="1"/>
</dbReference>
<gene>
    <name evidence="1" type="primary">gcvH</name>
    <name type="ordered locus">lin2519</name>
</gene>
<evidence type="ECO:0000255" key="1">
    <source>
        <dbReference type="HAMAP-Rule" id="MF_00272"/>
    </source>
</evidence>
<evidence type="ECO:0000255" key="2">
    <source>
        <dbReference type="PROSITE-ProRule" id="PRU01066"/>
    </source>
</evidence>
<organism>
    <name type="scientific">Listeria innocua serovar 6a (strain ATCC BAA-680 / CLIP 11262)</name>
    <dbReference type="NCBI Taxonomy" id="272626"/>
    <lineage>
        <taxon>Bacteria</taxon>
        <taxon>Bacillati</taxon>
        <taxon>Bacillota</taxon>
        <taxon>Bacilli</taxon>
        <taxon>Bacillales</taxon>
        <taxon>Listeriaceae</taxon>
        <taxon>Listeria</taxon>
    </lineage>
</organism>
<comment type="function">
    <text evidence="1">The glycine cleavage system catalyzes the degradation of glycine. The H protein shuttles the methylamine group of glycine from the P protein to the T protein.</text>
</comment>
<comment type="function">
    <text evidence="1">Is also involved in protein lipoylation via its role as an octanoyl/lipoyl carrier protein intermediate.</text>
</comment>
<comment type="cofactor">
    <cofactor evidence="1">
        <name>(R)-lipoate</name>
        <dbReference type="ChEBI" id="CHEBI:83088"/>
    </cofactor>
    <text evidence="1">Binds 1 lipoyl cofactor covalently.</text>
</comment>
<comment type="subunit">
    <text evidence="1">The glycine cleavage system is composed of four proteins: P, T, L and H.</text>
</comment>
<comment type="similarity">
    <text evidence="1">Belongs to the GcvH family.</text>
</comment>
<protein>
    <recommendedName>
        <fullName evidence="1">Glycine cleavage system H protein</fullName>
    </recommendedName>
    <alternativeName>
        <fullName evidence="1">Octanoyl/lipoyl carrier protein</fullName>
    </alternativeName>
</protein>
<feature type="chain" id="PRO_0000166223" description="Glycine cleavage system H protein">
    <location>
        <begin position="1"/>
        <end position="125"/>
    </location>
</feature>
<feature type="domain" description="Lipoyl-binding" evidence="2">
    <location>
        <begin position="22"/>
        <end position="104"/>
    </location>
</feature>
<feature type="modified residue" description="N6-lipoyllysine" evidence="1">
    <location>
        <position position="63"/>
    </location>
</feature>